<reference key="1">
    <citation type="submission" date="2004-06" db="EMBL/GenBank/DDBJ databases">
        <authorList>
            <consortium name="NIH - Xenopus Gene Collection (XGC) project"/>
        </authorList>
    </citation>
    <scope>NUCLEOTIDE SEQUENCE [LARGE SCALE MRNA]</scope>
    <source>
        <tissue>Spleen</tissue>
    </source>
</reference>
<protein>
    <recommendedName>
        <fullName>Nuclear prelamin A recognition factor</fullName>
    </recommendedName>
</protein>
<evidence type="ECO:0000250" key="1"/>
<evidence type="ECO:0000305" key="2"/>
<feature type="chain" id="PRO_0000288483" description="Nuclear prelamin A recognition factor">
    <location>
        <begin position="1"/>
        <end position="456"/>
    </location>
</feature>
<proteinExistence type="evidence at transcript level"/>
<gene>
    <name type="primary">narf</name>
</gene>
<dbReference type="EMBL" id="BC073323">
    <property type="protein sequence ID" value="AAH73323.1"/>
    <property type="molecule type" value="mRNA"/>
</dbReference>
<dbReference type="RefSeq" id="NP_001085771.1">
    <property type="nucleotide sequence ID" value="NM_001092302.1"/>
</dbReference>
<dbReference type="SMR" id="Q6GP25"/>
<dbReference type="DNASU" id="444198"/>
<dbReference type="GeneID" id="444198"/>
<dbReference type="KEGG" id="xla:444198"/>
<dbReference type="AGR" id="Xenbase:XB-GENE-6255945"/>
<dbReference type="CTD" id="444198"/>
<dbReference type="Xenbase" id="XB-GENE-6255945">
    <property type="gene designation" value="narf.L"/>
</dbReference>
<dbReference type="OrthoDB" id="10253113at2759"/>
<dbReference type="Proteomes" id="UP000186698">
    <property type="component" value="Chromosome 9_10L"/>
</dbReference>
<dbReference type="Bgee" id="444198">
    <property type="expression patterns" value="Expressed in egg cell and 19 other cell types or tissues"/>
</dbReference>
<dbReference type="GO" id="GO:0005638">
    <property type="term" value="C:lamin filament"/>
    <property type="evidence" value="ECO:0000318"/>
    <property type="project" value="GO_Central"/>
</dbReference>
<dbReference type="GO" id="GO:0005521">
    <property type="term" value="F:lamin binding"/>
    <property type="evidence" value="ECO:0000318"/>
    <property type="project" value="GO_Central"/>
</dbReference>
<dbReference type="Gene3D" id="3.40.50.1780">
    <property type="match status" value="1"/>
</dbReference>
<dbReference type="Gene3D" id="3.40.950.10">
    <property type="entry name" value="Fe-only Hydrogenase (Larger Subunit), Chain L, domain 3"/>
    <property type="match status" value="1"/>
</dbReference>
<dbReference type="InterPro" id="IPR050340">
    <property type="entry name" value="Cytosolic_Fe-S_CAF"/>
</dbReference>
<dbReference type="InterPro" id="IPR009016">
    <property type="entry name" value="Fe_hydrogenase"/>
</dbReference>
<dbReference type="InterPro" id="IPR004108">
    <property type="entry name" value="Fe_hydrogenase_lsu_C"/>
</dbReference>
<dbReference type="InterPro" id="IPR003149">
    <property type="entry name" value="Fe_hydrogenase_ssu"/>
</dbReference>
<dbReference type="PANTHER" id="PTHR11615">
    <property type="entry name" value="NITRATE, FORMATE, IRON DEHYDROGENASE"/>
    <property type="match status" value="1"/>
</dbReference>
<dbReference type="Pfam" id="PF02906">
    <property type="entry name" value="Fe_hyd_lg_C"/>
    <property type="match status" value="1"/>
</dbReference>
<dbReference type="Pfam" id="PF02256">
    <property type="entry name" value="Fe_hyd_SSU"/>
    <property type="match status" value="1"/>
</dbReference>
<dbReference type="SMART" id="SM00902">
    <property type="entry name" value="Fe_hyd_SSU"/>
    <property type="match status" value="1"/>
</dbReference>
<dbReference type="SUPFAM" id="SSF53920">
    <property type="entry name" value="Fe-only hydrogenase"/>
    <property type="match status" value="1"/>
</dbReference>
<keyword id="KW-0539">Nucleus</keyword>
<keyword id="KW-1185">Reference proteome</keyword>
<accession>Q6GP25</accession>
<comment type="subcellular location">
    <subcellularLocation>
        <location evidence="1">Nucleus</location>
    </subcellularLocation>
</comment>
<comment type="similarity">
    <text evidence="2">Belongs to the NARF family.</text>
</comment>
<name>NARF_XENLA</name>
<sequence length="456" mass="51511">MKCENCTKTECSKKKKTEENGEILDAMALADGEEKSEFHQLAEAKIFLSDCLACGNCVTSEEGAKIFAQNQKELFKVLNRNKKCDSSLHKLVVASISPQSVPYFAVKFHLSVCEASKKLCGFLKSLGVHHVLDTTIAADFSILETQKDFIQRFRRQTQDEHAFPMFASACPGWVQYAERVLGDSVTPHICTAKSPQQIMGSLVKGYFASSKNVSPDKIFHLMVAPCYDRKLEALREDYYTELYNCRDVDCVLTSGEVMQIMEQQNISVKEVMEFPLENLFGETSCVFVRHEGTSSDGYLAHVFRHAAKELFDMDVQEITYKALKNKDFLEVSLEKDGETVLRFAAAYGFRNIQNMVLKLRKGKFHYHFVEVLACPGGCLNGKGQAQTMDGKVERALLHEMEEVYTRVPIQNPESNPHIQALYEDWLQGAESQKTKQTLHTKIVASAQSAARLDMKW</sequence>
<organism>
    <name type="scientific">Xenopus laevis</name>
    <name type="common">African clawed frog</name>
    <dbReference type="NCBI Taxonomy" id="8355"/>
    <lineage>
        <taxon>Eukaryota</taxon>
        <taxon>Metazoa</taxon>
        <taxon>Chordata</taxon>
        <taxon>Craniata</taxon>
        <taxon>Vertebrata</taxon>
        <taxon>Euteleostomi</taxon>
        <taxon>Amphibia</taxon>
        <taxon>Batrachia</taxon>
        <taxon>Anura</taxon>
        <taxon>Pipoidea</taxon>
        <taxon>Pipidae</taxon>
        <taxon>Xenopodinae</taxon>
        <taxon>Xenopus</taxon>
        <taxon>Xenopus</taxon>
    </lineage>
</organism>